<comment type="function">
    <text evidence="1">Transfers a GMP moiety from GTP to Mo-molybdopterin (Mo-MPT) cofactor (Moco or molybdenum cofactor) to form Mo-molybdopterin guanine dinucleotide (Mo-MGD) cofactor.</text>
</comment>
<comment type="catalytic activity">
    <reaction evidence="1">
        <text>Mo-molybdopterin + GTP + H(+) = Mo-molybdopterin guanine dinucleotide + diphosphate</text>
        <dbReference type="Rhea" id="RHEA:34243"/>
        <dbReference type="ChEBI" id="CHEBI:15378"/>
        <dbReference type="ChEBI" id="CHEBI:33019"/>
        <dbReference type="ChEBI" id="CHEBI:37565"/>
        <dbReference type="ChEBI" id="CHEBI:71302"/>
        <dbReference type="ChEBI" id="CHEBI:71310"/>
        <dbReference type="EC" id="2.7.7.77"/>
    </reaction>
</comment>
<comment type="cofactor">
    <cofactor evidence="1">
        <name>Mg(2+)</name>
        <dbReference type="ChEBI" id="CHEBI:18420"/>
    </cofactor>
</comment>
<comment type="subunit">
    <text evidence="1">Monomer.</text>
</comment>
<comment type="subcellular location">
    <subcellularLocation>
        <location evidence="1">Cytoplasm</location>
    </subcellularLocation>
</comment>
<comment type="domain">
    <text evidence="1">The N-terminal domain determines nucleotide recognition and specific binding, while the C-terminal domain determines the specific binding to the target protein.</text>
</comment>
<comment type="similarity">
    <text evidence="1">Belongs to the MobA family.</text>
</comment>
<feature type="chain" id="PRO_0000134903" description="Molybdenum cofactor guanylyltransferase">
    <location>
        <begin position="1"/>
        <end position="204"/>
    </location>
</feature>
<feature type="binding site" evidence="1">
    <location>
        <begin position="12"/>
        <end position="14"/>
    </location>
    <ligand>
        <name>GTP</name>
        <dbReference type="ChEBI" id="CHEBI:37565"/>
    </ligand>
</feature>
<feature type="binding site" evidence="1">
    <location>
        <position position="25"/>
    </location>
    <ligand>
        <name>GTP</name>
        <dbReference type="ChEBI" id="CHEBI:37565"/>
    </ligand>
</feature>
<feature type="binding site" evidence="1">
    <location>
        <position position="53"/>
    </location>
    <ligand>
        <name>GTP</name>
        <dbReference type="ChEBI" id="CHEBI:37565"/>
    </ligand>
</feature>
<feature type="binding site" evidence="1">
    <location>
        <position position="71"/>
    </location>
    <ligand>
        <name>GTP</name>
        <dbReference type="ChEBI" id="CHEBI:37565"/>
    </ligand>
</feature>
<feature type="binding site" evidence="1">
    <location>
        <position position="101"/>
    </location>
    <ligand>
        <name>GTP</name>
        <dbReference type="ChEBI" id="CHEBI:37565"/>
    </ligand>
</feature>
<feature type="binding site" evidence="1">
    <location>
        <position position="101"/>
    </location>
    <ligand>
        <name>Mg(2+)</name>
        <dbReference type="ChEBI" id="CHEBI:18420"/>
    </ligand>
</feature>
<sequence>MIPTSDITGLILAGGRGSRMGGVDKGLQVFNGAPMAMHALMRLSPQVGHVLINANRNLAAYESFGVPVVVDAVPDFAGPLAGILAGLEQCQTPYLLTAPCDSPFVPTDLAARLSTALAEAGARIAMPVTLEPDENGRPRRQVQPVFCLIDAALADDLTTYLQQGGRKIDAWTARHPSVEVVFDDAAAFANINTLAELRQLAERR</sequence>
<dbReference type="EC" id="2.7.7.77" evidence="1"/>
<dbReference type="EMBL" id="AL646052">
    <property type="protein sequence ID" value="CAD14740.1"/>
    <property type="molecule type" value="Genomic_DNA"/>
</dbReference>
<dbReference type="RefSeq" id="WP_011000990.1">
    <property type="nucleotide sequence ID" value="NC_003295.1"/>
</dbReference>
<dbReference type="SMR" id="Q8Y0K5"/>
<dbReference type="STRING" id="267608.RSc1038"/>
<dbReference type="EnsemblBacteria" id="CAD14740">
    <property type="protein sequence ID" value="CAD14740"/>
    <property type="gene ID" value="RSc1038"/>
</dbReference>
<dbReference type="KEGG" id="rso:RSc1038"/>
<dbReference type="eggNOG" id="COG0746">
    <property type="taxonomic scope" value="Bacteria"/>
</dbReference>
<dbReference type="HOGENOM" id="CLU_055597_5_1_4"/>
<dbReference type="Proteomes" id="UP000001436">
    <property type="component" value="Chromosome"/>
</dbReference>
<dbReference type="GO" id="GO:0005737">
    <property type="term" value="C:cytoplasm"/>
    <property type="evidence" value="ECO:0007669"/>
    <property type="project" value="UniProtKB-SubCell"/>
</dbReference>
<dbReference type="GO" id="GO:0005525">
    <property type="term" value="F:GTP binding"/>
    <property type="evidence" value="ECO:0007669"/>
    <property type="project" value="UniProtKB-UniRule"/>
</dbReference>
<dbReference type="GO" id="GO:0046872">
    <property type="term" value="F:metal ion binding"/>
    <property type="evidence" value="ECO:0007669"/>
    <property type="project" value="UniProtKB-KW"/>
</dbReference>
<dbReference type="GO" id="GO:0061603">
    <property type="term" value="F:molybdenum cofactor guanylyltransferase activity"/>
    <property type="evidence" value="ECO:0007669"/>
    <property type="project" value="UniProtKB-EC"/>
</dbReference>
<dbReference type="GO" id="GO:1902758">
    <property type="term" value="P:bis(molybdopterin guanine dinucleotide)molybdenum biosynthetic process"/>
    <property type="evidence" value="ECO:0007669"/>
    <property type="project" value="TreeGrafter"/>
</dbReference>
<dbReference type="CDD" id="cd02503">
    <property type="entry name" value="MobA"/>
    <property type="match status" value="1"/>
</dbReference>
<dbReference type="Gene3D" id="3.90.550.10">
    <property type="entry name" value="Spore Coat Polysaccharide Biosynthesis Protein SpsA, Chain A"/>
    <property type="match status" value="1"/>
</dbReference>
<dbReference type="HAMAP" id="MF_00316">
    <property type="entry name" value="MobA"/>
    <property type="match status" value="1"/>
</dbReference>
<dbReference type="InterPro" id="IPR025877">
    <property type="entry name" value="MobA-like_NTP_Trfase"/>
</dbReference>
<dbReference type="InterPro" id="IPR013482">
    <property type="entry name" value="Molybde_CF_guanTrfase"/>
</dbReference>
<dbReference type="InterPro" id="IPR029044">
    <property type="entry name" value="Nucleotide-diphossugar_trans"/>
</dbReference>
<dbReference type="NCBIfam" id="TIGR02665">
    <property type="entry name" value="molyb_mobA"/>
    <property type="match status" value="1"/>
</dbReference>
<dbReference type="PANTHER" id="PTHR19136">
    <property type="entry name" value="MOLYBDENUM COFACTOR GUANYLYLTRANSFERASE"/>
    <property type="match status" value="1"/>
</dbReference>
<dbReference type="PANTHER" id="PTHR19136:SF81">
    <property type="entry name" value="MOLYBDENUM COFACTOR GUANYLYLTRANSFERASE"/>
    <property type="match status" value="1"/>
</dbReference>
<dbReference type="Pfam" id="PF12804">
    <property type="entry name" value="NTP_transf_3"/>
    <property type="match status" value="1"/>
</dbReference>
<dbReference type="SUPFAM" id="SSF53448">
    <property type="entry name" value="Nucleotide-diphospho-sugar transferases"/>
    <property type="match status" value="1"/>
</dbReference>
<reference key="1">
    <citation type="journal article" date="2002" name="Nature">
        <title>Genome sequence of the plant pathogen Ralstonia solanacearum.</title>
        <authorList>
            <person name="Salanoubat M."/>
            <person name="Genin S."/>
            <person name="Artiguenave F."/>
            <person name="Gouzy J."/>
            <person name="Mangenot S."/>
            <person name="Arlat M."/>
            <person name="Billault A."/>
            <person name="Brottier P."/>
            <person name="Camus J.-C."/>
            <person name="Cattolico L."/>
            <person name="Chandler M."/>
            <person name="Choisne N."/>
            <person name="Claudel-Renard C."/>
            <person name="Cunnac S."/>
            <person name="Demange N."/>
            <person name="Gaspin C."/>
            <person name="Lavie M."/>
            <person name="Moisan A."/>
            <person name="Robert C."/>
            <person name="Saurin W."/>
            <person name="Schiex T."/>
            <person name="Siguier P."/>
            <person name="Thebault P."/>
            <person name="Whalen M."/>
            <person name="Wincker P."/>
            <person name="Levy M."/>
            <person name="Weissenbach J."/>
            <person name="Boucher C.A."/>
        </authorList>
    </citation>
    <scope>NUCLEOTIDE SEQUENCE [LARGE SCALE GENOMIC DNA]</scope>
    <source>
        <strain>ATCC BAA-1114 / GMI1000</strain>
    </source>
</reference>
<gene>
    <name evidence="1" type="primary">mobA</name>
    <name type="ordered locus">RSc1038</name>
    <name type="ORF">RS04212</name>
</gene>
<protein>
    <recommendedName>
        <fullName evidence="1">Molybdenum cofactor guanylyltransferase</fullName>
        <shortName evidence="1">MoCo guanylyltransferase</shortName>
        <ecNumber evidence="1">2.7.7.77</ecNumber>
    </recommendedName>
    <alternativeName>
        <fullName evidence="1">GTP:molybdopterin guanylyltransferase</fullName>
    </alternativeName>
    <alternativeName>
        <fullName evidence="1">Mo-MPT guanylyltransferase</fullName>
    </alternativeName>
    <alternativeName>
        <fullName evidence="1">Molybdopterin guanylyltransferase</fullName>
    </alternativeName>
    <alternativeName>
        <fullName evidence="1">Molybdopterin-guanine dinucleotide synthase</fullName>
        <shortName evidence="1">MGD synthase</shortName>
    </alternativeName>
</protein>
<keyword id="KW-0963">Cytoplasm</keyword>
<keyword id="KW-0342">GTP-binding</keyword>
<keyword id="KW-0460">Magnesium</keyword>
<keyword id="KW-0479">Metal-binding</keyword>
<keyword id="KW-0501">Molybdenum cofactor biosynthesis</keyword>
<keyword id="KW-0547">Nucleotide-binding</keyword>
<keyword id="KW-1185">Reference proteome</keyword>
<keyword id="KW-0808">Transferase</keyword>
<accession>Q8Y0K5</accession>
<organism>
    <name type="scientific">Ralstonia nicotianae (strain ATCC BAA-1114 / GMI1000)</name>
    <name type="common">Ralstonia solanacearum</name>
    <dbReference type="NCBI Taxonomy" id="267608"/>
    <lineage>
        <taxon>Bacteria</taxon>
        <taxon>Pseudomonadati</taxon>
        <taxon>Pseudomonadota</taxon>
        <taxon>Betaproteobacteria</taxon>
        <taxon>Burkholderiales</taxon>
        <taxon>Burkholderiaceae</taxon>
        <taxon>Ralstonia</taxon>
        <taxon>Ralstonia solanacearum species complex</taxon>
    </lineage>
</organism>
<evidence type="ECO:0000255" key="1">
    <source>
        <dbReference type="HAMAP-Rule" id="MF_00316"/>
    </source>
</evidence>
<name>MOBA_RALN1</name>
<proteinExistence type="inferred from homology"/>